<gene>
    <name evidence="1" type="primary">fmt</name>
    <name type="ordered locus">Clos_1428</name>
</gene>
<feature type="chain" id="PRO_1000058395" description="Methionyl-tRNA formyltransferase">
    <location>
        <begin position="1"/>
        <end position="310"/>
    </location>
</feature>
<feature type="binding site" evidence="1">
    <location>
        <begin position="109"/>
        <end position="112"/>
    </location>
    <ligand>
        <name>(6S)-5,6,7,8-tetrahydrofolate</name>
        <dbReference type="ChEBI" id="CHEBI:57453"/>
    </ligand>
</feature>
<sequence>MKIIYMGTPEFAVPCLEMLIDSGHEIVGVFTQPDKPSGRGQKMNRTPVKEKALAHNIPVFQPHTLRDTNVMNEIENLKPDLIVVVAYGQILPKAILELPKHGCINVHASLLPKYRGAGPINWVIINGEKKTGITTMYMDVGLDKGDMILKEEVEIGAEETAGELHDRLMHLGAQVLRKTIGLIENNEITAIPQNHSESTYAPILTKDLGKIDWSQSAIEIKNLIRGTIPWPTAFTFYEGQVMKIWKSTVIESELQEVPGKIIDVKKDCILVATGQNILSIEEIQFSGKKRMGVRDYLVGNAIEKGNILGE</sequence>
<evidence type="ECO:0000255" key="1">
    <source>
        <dbReference type="HAMAP-Rule" id="MF_00182"/>
    </source>
</evidence>
<keyword id="KW-0648">Protein biosynthesis</keyword>
<keyword id="KW-1185">Reference proteome</keyword>
<keyword id="KW-0808">Transferase</keyword>
<reference key="1">
    <citation type="submission" date="2007-10" db="EMBL/GenBank/DDBJ databases">
        <title>Complete genome of Alkaliphilus oremlandii OhILAs.</title>
        <authorList>
            <person name="Copeland A."/>
            <person name="Lucas S."/>
            <person name="Lapidus A."/>
            <person name="Barry K."/>
            <person name="Detter J.C."/>
            <person name="Glavina del Rio T."/>
            <person name="Hammon N."/>
            <person name="Israni S."/>
            <person name="Dalin E."/>
            <person name="Tice H."/>
            <person name="Pitluck S."/>
            <person name="Chain P."/>
            <person name="Malfatti S."/>
            <person name="Shin M."/>
            <person name="Vergez L."/>
            <person name="Schmutz J."/>
            <person name="Larimer F."/>
            <person name="Land M."/>
            <person name="Hauser L."/>
            <person name="Kyrpides N."/>
            <person name="Mikhailova N."/>
            <person name="Stolz J.F."/>
            <person name="Dawson A."/>
            <person name="Fisher E."/>
            <person name="Crable B."/>
            <person name="Perera E."/>
            <person name="Lisak J."/>
            <person name="Ranganathan M."/>
            <person name="Basu P."/>
            <person name="Richardson P."/>
        </authorList>
    </citation>
    <scope>NUCLEOTIDE SEQUENCE [LARGE SCALE GENOMIC DNA]</scope>
    <source>
        <strain>OhILAs</strain>
    </source>
</reference>
<comment type="function">
    <text evidence="1">Attaches a formyl group to the free amino group of methionyl-tRNA(fMet). The formyl group appears to play a dual role in the initiator identity of N-formylmethionyl-tRNA by promoting its recognition by IF2 and preventing the misappropriation of this tRNA by the elongation apparatus.</text>
</comment>
<comment type="catalytic activity">
    <reaction evidence="1">
        <text>L-methionyl-tRNA(fMet) + (6R)-10-formyltetrahydrofolate = N-formyl-L-methionyl-tRNA(fMet) + (6S)-5,6,7,8-tetrahydrofolate + H(+)</text>
        <dbReference type="Rhea" id="RHEA:24380"/>
        <dbReference type="Rhea" id="RHEA-COMP:9952"/>
        <dbReference type="Rhea" id="RHEA-COMP:9953"/>
        <dbReference type="ChEBI" id="CHEBI:15378"/>
        <dbReference type="ChEBI" id="CHEBI:57453"/>
        <dbReference type="ChEBI" id="CHEBI:78530"/>
        <dbReference type="ChEBI" id="CHEBI:78844"/>
        <dbReference type="ChEBI" id="CHEBI:195366"/>
        <dbReference type="EC" id="2.1.2.9"/>
    </reaction>
</comment>
<comment type="similarity">
    <text evidence="1">Belongs to the Fmt family.</text>
</comment>
<name>FMT_ALKOO</name>
<dbReference type="EC" id="2.1.2.9" evidence="1"/>
<dbReference type="EMBL" id="CP000853">
    <property type="protein sequence ID" value="ABW18972.1"/>
    <property type="molecule type" value="Genomic_DNA"/>
</dbReference>
<dbReference type="RefSeq" id="WP_012159284.1">
    <property type="nucleotide sequence ID" value="NC_009922.1"/>
</dbReference>
<dbReference type="SMR" id="A8MH85"/>
<dbReference type="STRING" id="350688.Clos_1428"/>
<dbReference type="KEGG" id="aoe:Clos_1428"/>
<dbReference type="eggNOG" id="COG0223">
    <property type="taxonomic scope" value="Bacteria"/>
</dbReference>
<dbReference type="HOGENOM" id="CLU_033347_1_1_9"/>
<dbReference type="OrthoDB" id="9802815at2"/>
<dbReference type="Proteomes" id="UP000000269">
    <property type="component" value="Chromosome"/>
</dbReference>
<dbReference type="GO" id="GO:0005829">
    <property type="term" value="C:cytosol"/>
    <property type="evidence" value="ECO:0007669"/>
    <property type="project" value="TreeGrafter"/>
</dbReference>
<dbReference type="GO" id="GO:0004479">
    <property type="term" value="F:methionyl-tRNA formyltransferase activity"/>
    <property type="evidence" value="ECO:0007669"/>
    <property type="project" value="UniProtKB-UniRule"/>
</dbReference>
<dbReference type="CDD" id="cd08646">
    <property type="entry name" value="FMT_core_Met-tRNA-FMT_N"/>
    <property type="match status" value="1"/>
</dbReference>
<dbReference type="CDD" id="cd08704">
    <property type="entry name" value="Met_tRNA_FMT_C"/>
    <property type="match status" value="1"/>
</dbReference>
<dbReference type="FunFam" id="3.40.50.12230:FF:000001">
    <property type="entry name" value="Methionyl-tRNA formyltransferase"/>
    <property type="match status" value="1"/>
</dbReference>
<dbReference type="Gene3D" id="3.40.50.12230">
    <property type="match status" value="1"/>
</dbReference>
<dbReference type="HAMAP" id="MF_00182">
    <property type="entry name" value="Formyl_trans"/>
    <property type="match status" value="1"/>
</dbReference>
<dbReference type="InterPro" id="IPR005794">
    <property type="entry name" value="Fmt"/>
</dbReference>
<dbReference type="InterPro" id="IPR005793">
    <property type="entry name" value="Formyl_trans_C"/>
</dbReference>
<dbReference type="InterPro" id="IPR002376">
    <property type="entry name" value="Formyl_transf_N"/>
</dbReference>
<dbReference type="InterPro" id="IPR036477">
    <property type="entry name" value="Formyl_transf_N_sf"/>
</dbReference>
<dbReference type="InterPro" id="IPR011034">
    <property type="entry name" value="Formyl_transferase-like_C_sf"/>
</dbReference>
<dbReference type="InterPro" id="IPR001555">
    <property type="entry name" value="GART_AS"/>
</dbReference>
<dbReference type="InterPro" id="IPR044135">
    <property type="entry name" value="Met-tRNA-FMT_C"/>
</dbReference>
<dbReference type="InterPro" id="IPR041711">
    <property type="entry name" value="Met-tRNA-FMT_N"/>
</dbReference>
<dbReference type="NCBIfam" id="TIGR00460">
    <property type="entry name" value="fmt"/>
    <property type="match status" value="1"/>
</dbReference>
<dbReference type="PANTHER" id="PTHR11138">
    <property type="entry name" value="METHIONYL-TRNA FORMYLTRANSFERASE"/>
    <property type="match status" value="1"/>
</dbReference>
<dbReference type="PANTHER" id="PTHR11138:SF5">
    <property type="entry name" value="METHIONYL-TRNA FORMYLTRANSFERASE, MITOCHONDRIAL"/>
    <property type="match status" value="1"/>
</dbReference>
<dbReference type="Pfam" id="PF02911">
    <property type="entry name" value="Formyl_trans_C"/>
    <property type="match status" value="1"/>
</dbReference>
<dbReference type="Pfam" id="PF00551">
    <property type="entry name" value="Formyl_trans_N"/>
    <property type="match status" value="1"/>
</dbReference>
<dbReference type="SUPFAM" id="SSF50486">
    <property type="entry name" value="FMT C-terminal domain-like"/>
    <property type="match status" value="1"/>
</dbReference>
<dbReference type="SUPFAM" id="SSF53328">
    <property type="entry name" value="Formyltransferase"/>
    <property type="match status" value="1"/>
</dbReference>
<dbReference type="PROSITE" id="PS00373">
    <property type="entry name" value="GART"/>
    <property type="match status" value="1"/>
</dbReference>
<proteinExistence type="inferred from homology"/>
<protein>
    <recommendedName>
        <fullName evidence="1">Methionyl-tRNA formyltransferase</fullName>
        <ecNumber evidence="1">2.1.2.9</ecNumber>
    </recommendedName>
</protein>
<accession>A8MH85</accession>
<organism>
    <name type="scientific">Alkaliphilus oremlandii (strain OhILAs)</name>
    <name type="common">Clostridium oremlandii (strain OhILAs)</name>
    <dbReference type="NCBI Taxonomy" id="350688"/>
    <lineage>
        <taxon>Bacteria</taxon>
        <taxon>Bacillati</taxon>
        <taxon>Bacillota</taxon>
        <taxon>Clostridia</taxon>
        <taxon>Peptostreptococcales</taxon>
        <taxon>Natronincolaceae</taxon>
        <taxon>Alkaliphilus</taxon>
    </lineage>
</organism>